<name>FKBP4_CRYNJ</name>
<gene>
    <name type="primary">FPR4</name>
    <name type="ordered locus">CND02730</name>
</gene>
<protein>
    <recommendedName>
        <fullName>FK506-binding protein 4</fullName>
        <ecNumber evidence="2">5.2.1.8</ecNumber>
    </recommendedName>
    <alternativeName>
        <fullName evidence="2">Histone proline isomerase</fullName>
    </alternativeName>
    <alternativeName>
        <fullName>Peptidyl-prolyl cis-trans isomerase</fullName>
        <shortName>PPIase</shortName>
    </alternativeName>
    <alternativeName>
        <fullName>Rotamase</fullName>
    </alternativeName>
</protein>
<feature type="chain" id="PRO_0000233079" description="FK506-binding protein 4">
    <location>
        <begin position="1"/>
        <end position="405"/>
    </location>
</feature>
<feature type="domain" description="PPIase FKBP-type" evidence="3">
    <location>
        <begin position="319"/>
        <end position="405"/>
    </location>
</feature>
<feature type="region of interest" description="Disordered" evidence="4">
    <location>
        <begin position="49"/>
        <end position="117"/>
    </location>
</feature>
<feature type="region of interest" description="Disordered" evidence="4">
    <location>
        <begin position="164"/>
        <end position="297"/>
    </location>
</feature>
<feature type="compositionally biased region" description="Acidic residues" evidence="4">
    <location>
        <begin position="59"/>
        <end position="84"/>
    </location>
</feature>
<feature type="compositionally biased region" description="Acidic residues" evidence="4">
    <location>
        <begin position="98"/>
        <end position="117"/>
    </location>
</feature>
<feature type="compositionally biased region" description="Acidic residues" evidence="4">
    <location>
        <begin position="165"/>
        <end position="201"/>
    </location>
</feature>
<feature type="compositionally biased region" description="Basic and acidic residues" evidence="4">
    <location>
        <begin position="238"/>
        <end position="252"/>
    </location>
</feature>
<feature type="compositionally biased region" description="Basic and acidic residues" evidence="4">
    <location>
        <begin position="265"/>
        <end position="276"/>
    </location>
</feature>
<accession>P0CP98</accession>
<accession>Q55TU1</accession>
<accession>Q5KIJ5</accession>
<evidence type="ECO:0000250" key="1"/>
<evidence type="ECO:0000250" key="2">
    <source>
        <dbReference type="UniProtKB" id="Q06205"/>
    </source>
</evidence>
<evidence type="ECO:0000255" key="3">
    <source>
        <dbReference type="PROSITE-ProRule" id="PRU00277"/>
    </source>
</evidence>
<evidence type="ECO:0000256" key="4">
    <source>
        <dbReference type="SAM" id="MobiDB-lite"/>
    </source>
</evidence>
<evidence type="ECO:0000305" key="5"/>
<organism>
    <name type="scientific">Cryptococcus neoformans var. neoformans serotype D (strain JEC21 / ATCC MYA-565)</name>
    <name type="common">Filobasidiella neoformans</name>
    <dbReference type="NCBI Taxonomy" id="214684"/>
    <lineage>
        <taxon>Eukaryota</taxon>
        <taxon>Fungi</taxon>
        <taxon>Dikarya</taxon>
        <taxon>Basidiomycota</taxon>
        <taxon>Agaricomycotina</taxon>
        <taxon>Tremellomycetes</taxon>
        <taxon>Tremellales</taxon>
        <taxon>Cryptococcaceae</taxon>
        <taxon>Cryptococcus</taxon>
        <taxon>Cryptococcus neoformans species complex</taxon>
    </lineage>
</organism>
<comment type="function">
    <text evidence="2">PPIase that acts as a histone chaperone. Histone proline isomerase that increases the rate of cis-trans isomerization at prolines on the histone H3 N-terminal tail. Proline isomerization influences H3 methylation thereby regulating gene expression.</text>
</comment>
<comment type="catalytic activity">
    <reaction evidence="2">
        <text>[protein]-peptidylproline (omega=180) = [protein]-peptidylproline (omega=0)</text>
        <dbReference type="Rhea" id="RHEA:16237"/>
        <dbReference type="Rhea" id="RHEA-COMP:10747"/>
        <dbReference type="Rhea" id="RHEA-COMP:10748"/>
        <dbReference type="ChEBI" id="CHEBI:83833"/>
        <dbReference type="ChEBI" id="CHEBI:83834"/>
        <dbReference type="EC" id="5.2.1.8"/>
    </reaction>
</comment>
<comment type="activity regulation">
    <text evidence="1">Inhibited by both FK506 and rapamycin.</text>
</comment>
<comment type="subunit">
    <text evidence="2">Binds to histones H3 and H4.</text>
</comment>
<comment type="subcellular location">
    <subcellularLocation>
        <location evidence="2">Nucleus</location>
    </subcellularLocation>
</comment>
<comment type="similarity">
    <text evidence="5">Belongs to the FKBP-type PPIase family. FKBP3/4 subfamily.</text>
</comment>
<reference key="1">
    <citation type="journal article" date="2005" name="Science">
        <title>The genome of the basidiomycetous yeast and human pathogen Cryptococcus neoformans.</title>
        <authorList>
            <person name="Loftus B.J."/>
            <person name="Fung E."/>
            <person name="Roncaglia P."/>
            <person name="Rowley D."/>
            <person name="Amedeo P."/>
            <person name="Bruno D."/>
            <person name="Vamathevan J."/>
            <person name="Miranda M."/>
            <person name="Anderson I.J."/>
            <person name="Fraser J.A."/>
            <person name="Allen J.E."/>
            <person name="Bosdet I.E."/>
            <person name="Brent M.R."/>
            <person name="Chiu R."/>
            <person name="Doering T.L."/>
            <person name="Donlin M.J."/>
            <person name="D'Souza C.A."/>
            <person name="Fox D.S."/>
            <person name="Grinberg V."/>
            <person name="Fu J."/>
            <person name="Fukushima M."/>
            <person name="Haas B.J."/>
            <person name="Huang J.C."/>
            <person name="Janbon G."/>
            <person name="Jones S.J.M."/>
            <person name="Koo H.L."/>
            <person name="Krzywinski M.I."/>
            <person name="Kwon-Chung K.J."/>
            <person name="Lengeler K.B."/>
            <person name="Maiti R."/>
            <person name="Marra M.A."/>
            <person name="Marra R.E."/>
            <person name="Mathewson C.A."/>
            <person name="Mitchell T.G."/>
            <person name="Pertea M."/>
            <person name="Riggs F.R."/>
            <person name="Salzberg S.L."/>
            <person name="Schein J.E."/>
            <person name="Shvartsbeyn A."/>
            <person name="Shin H."/>
            <person name="Shumway M."/>
            <person name="Specht C.A."/>
            <person name="Suh B.B."/>
            <person name="Tenney A."/>
            <person name="Utterback T.R."/>
            <person name="Wickes B.L."/>
            <person name="Wortman J.R."/>
            <person name="Wye N.H."/>
            <person name="Kronstad J.W."/>
            <person name="Lodge J.K."/>
            <person name="Heitman J."/>
            <person name="Davis R.W."/>
            <person name="Fraser C.M."/>
            <person name="Hyman R.W."/>
        </authorList>
    </citation>
    <scope>NUCLEOTIDE SEQUENCE [LARGE SCALE GENOMIC DNA]</scope>
    <source>
        <strain>JEC21 / ATCC MYA-565</strain>
    </source>
</reference>
<sequence>MPLAMNLWSLTLLPGQQYPTYVRRDFQITNAALGEELRSKDGRSVVKVTHNPISQSMLESDDEWSDEDEDEEILSEEDDGEMEVEEVKQKKGKKAEKVEEEDSEEEDEDESDFEDELEETNVLCSLTAGKTEQASLNLTFVRGEVVVFEVTGDNVVHLMGNYIQQDEDSDDESDSDFDGEDDYSELYGSDDDLELDSEEEAAVAKITEIPDEPTPKTKKALPAADKKPVPEAKPAQKRKAEELESPAKEDAALSKAQKKKLAKKAKVEGEKAEEKPAAAAVAEKPATKKEAKAPQKKTLPSGLIIEDIKIGDGPVAKTGKRLGMRYIGKLTNGKQFDANTSGKPFSFVLGKGEVIRGWDEGLAGMAVGGERRLTIPAALAYGNQKIPGIPKNSTLKFDVKLVSIN</sequence>
<keyword id="KW-0143">Chaperone</keyword>
<keyword id="KW-0413">Isomerase</keyword>
<keyword id="KW-0539">Nucleus</keyword>
<keyword id="KW-1185">Reference proteome</keyword>
<keyword id="KW-0697">Rotamase</keyword>
<proteinExistence type="inferred from homology"/>
<dbReference type="EC" id="5.2.1.8" evidence="2"/>
<dbReference type="EMBL" id="AE017344">
    <property type="protein sequence ID" value="AAW42924.1"/>
    <property type="molecule type" value="Genomic_DNA"/>
</dbReference>
<dbReference type="RefSeq" id="XP_570231.1">
    <property type="nucleotide sequence ID" value="XM_570231.1"/>
</dbReference>
<dbReference type="SMR" id="P0CP98"/>
<dbReference type="FunCoup" id="P0CP98">
    <property type="interactions" value="37"/>
</dbReference>
<dbReference type="STRING" id="214684.P0CP98"/>
<dbReference type="PaxDb" id="214684-P0CP98"/>
<dbReference type="EnsemblFungi" id="AAW42924">
    <property type="protein sequence ID" value="AAW42924"/>
    <property type="gene ID" value="CND02730"/>
</dbReference>
<dbReference type="GeneID" id="3257223"/>
<dbReference type="KEGG" id="cne:CND02730"/>
<dbReference type="VEuPathDB" id="FungiDB:CND02730"/>
<dbReference type="eggNOG" id="KOG0552">
    <property type="taxonomic scope" value="Eukaryota"/>
</dbReference>
<dbReference type="HOGENOM" id="CLU_022297_3_0_1"/>
<dbReference type="InParanoid" id="P0CP98"/>
<dbReference type="OMA" id="TLVKIHY"/>
<dbReference type="OrthoDB" id="1902587at2759"/>
<dbReference type="Proteomes" id="UP000002149">
    <property type="component" value="Chromosome 4"/>
</dbReference>
<dbReference type="GO" id="GO:0000785">
    <property type="term" value="C:chromatin"/>
    <property type="evidence" value="ECO:0000318"/>
    <property type="project" value="GO_Central"/>
</dbReference>
<dbReference type="GO" id="GO:0005730">
    <property type="term" value="C:nucleolus"/>
    <property type="evidence" value="ECO:0000318"/>
    <property type="project" value="GO_Central"/>
</dbReference>
<dbReference type="GO" id="GO:0003755">
    <property type="term" value="F:peptidyl-prolyl cis-trans isomerase activity"/>
    <property type="evidence" value="ECO:0000318"/>
    <property type="project" value="GO_Central"/>
</dbReference>
<dbReference type="FunFam" id="3.10.50.40:FF:000006">
    <property type="entry name" value="Peptidyl-prolyl cis-trans isomerase"/>
    <property type="match status" value="1"/>
</dbReference>
<dbReference type="Gene3D" id="3.10.50.40">
    <property type="match status" value="1"/>
</dbReference>
<dbReference type="Gene3D" id="2.60.120.340">
    <property type="entry name" value="Nucleoplasmin core domain"/>
    <property type="match status" value="1"/>
</dbReference>
<dbReference type="InterPro" id="IPR041232">
    <property type="entry name" value="NPL"/>
</dbReference>
<dbReference type="InterPro" id="IPR046357">
    <property type="entry name" value="PPIase_dom_sf"/>
</dbReference>
<dbReference type="InterPro" id="IPR001179">
    <property type="entry name" value="PPIase_FKBP_dom"/>
</dbReference>
<dbReference type="InterPro" id="IPR023566">
    <property type="entry name" value="PPIase_Fpr3/Fpr4-like"/>
</dbReference>
<dbReference type="PANTHER" id="PTHR43811:SF19">
    <property type="entry name" value="39 KDA FK506-BINDING NUCLEAR PROTEIN"/>
    <property type="match status" value="1"/>
</dbReference>
<dbReference type="PANTHER" id="PTHR43811">
    <property type="entry name" value="FKBP-TYPE PEPTIDYL-PROLYL CIS-TRANS ISOMERASE FKPA"/>
    <property type="match status" value="1"/>
</dbReference>
<dbReference type="Pfam" id="PF00254">
    <property type="entry name" value="FKBP_C"/>
    <property type="match status" value="1"/>
</dbReference>
<dbReference type="Pfam" id="PF17800">
    <property type="entry name" value="NPL"/>
    <property type="match status" value="1"/>
</dbReference>
<dbReference type="PIRSF" id="PIRSF001473">
    <property type="entry name" value="FK506-bp_FPR3"/>
    <property type="match status" value="1"/>
</dbReference>
<dbReference type="SUPFAM" id="SSF54534">
    <property type="entry name" value="FKBP-like"/>
    <property type="match status" value="1"/>
</dbReference>
<dbReference type="PROSITE" id="PS50059">
    <property type="entry name" value="FKBP_PPIASE"/>
    <property type="match status" value="1"/>
</dbReference>